<proteinExistence type="inferred from homology"/>
<name>MURA_PROMP</name>
<organism>
    <name type="scientific">Prochlorococcus marinus subsp. pastoris (strain CCMP1986 / NIES-2087 / MED4)</name>
    <dbReference type="NCBI Taxonomy" id="59919"/>
    <lineage>
        <taxon>Bacteria</taxon>
        <taxon>Bacillati</taxon>
        <taxon>Cyanobacteriota</taxon>
        <taxon>Cyanophyceae</taxon>
        <taxon>Synechococcales</taxon>
        <taxon>Prochlorococcaceae</taxon>
        <taxon>Prochlorococcus</taxon>
    </lineage>
</organism>
<evidence type="ECO:0000255" key="1">
    <source>
        <dbReference type="HAMAP-Rule" id="MF_00111"/>
    </source>
</evidence>
<evidence type="ECO:0000256" key="2">
    <source>
        <dbReference type="SAM" id="MobiDB-lite"/>
    </source>
</evidence>
<dbReference type="EC" id="2.5.1.7" evidence="1"/>
<dbReference type="EMBL" id="BX548174">
    <property type="protein sequence ID" value="CAE19759.1"/>
    <property type="molecule type" value="Genomic_DNA"/>
</dbReference>
<dbReference type="RefSeq" id="WP_011132934.1">
    <property type="nucleotide sequence ID" value="NC_005072.1"/>
</dbReference>
<dbReference type="SMR" id="Q7V0G1"/>
<dbReference type="STRING" id="59919.PMM1300"/>
<dbReference type="KEGG" id="pmm:PMM1300"/>
<dbReference type="eggNOG" id="COG0766">
    <property type="taxonomic scope" value="Bacteria"/>
</dbReference>
<dbReference type="HOGENOM" id="CLU_027387_0_0_3"/>
<dbReference type="OrthoDB" id="9803760at2"/>
<dbReference type="UniPathway" id="UPA00219"/>
<dbReference type="Proteomes" id="UP000001026">
    <property type="component" value="Chromosome"/>
</dbReference>
<dbReference type="GO" id="GO:0005737">
    <property type="term" value="C:cytoplasm"/>
    <property type="evidence" value="ECO:0007669"/>
    <property type="project" value="UniProtKB-SubCell"/>
</dbReference>
<dbReference type="GO" id="GO:0008760">
    <property type="term" value="F:UDP-N-acetylglucosamine 1-carboxyvinyltransferase activity"/>
    <property type="evidence" value="ECO:0007669"/>
    <property type="project" value="UniProtKB-UniRule"/>
</dbReference>
<dbReference type="GO" id="GO:0051301">
    <property type="term" value="P:cell division"/>
    <property type="evidence" value="ECO:0007669"/>
    <property type="project" value="UniProtKB-KW"/>
</dbReference>
<dbReference type="GO" id="GO:0071555">
    <property type="term" value="P:cell wall organization"/>
    <property type="evidence" value="ECO:0007669"/>
    <property type="project" value="UniProtKB-KW"/>
</dbReference>
<dbReference type="GO" id="GO:0009252">
    <property type="term" value="P:peptidoglycan biosynthetic process"/>
    <property type="evidence" value="ECO:0007669"/>
    <property type="project" value="UniProtKB-UniRule"/>
</dbReference>
<dbReference type="GO" id="GO:0008360">
    <property type="term" value="P:regulation of cell shape"/>
    <property type="evidence" value="ECO:0007669"/>
    <property type="project" value="UniProtKB-KW"/>
</dbReference>
<dbReference type="GO" id="GO:0019277">
    <property type="term" value="P:UDP-N-acetylgalactosamine biosynthetic process"/>
    <property type="evidence" value="ECO:0007669"/>
    <property type="project" value="InterPro"/>
</dbReference>
<dbReference type="CDD" id="cd01555">
    <property type="entry name" value="UdpNAET"/>
    <property type="match status" value="1"/>
</dbReference>
<dbReference type="Gene3D" id="3.65.10.10">
    <property type="entry name" value="Enolpyruvate transferase domain"/>
    <property type="match status" value="2"/>
</dbReference>
<dbReference type="HAMAP" id="MF_00111">
    <property type="entry name" value="MurA"/>
    <property type="match status" value="1"/>
</dbReference>
<dbReference type="InterPro" id="IPR001986">
    <property type="entry name" value="Enolpyruvate_Tfrase_dom"/>
</dbReference>
<dbReference type="InterPro" id="IPR036968">
    <property type="entry name" value="Enolpyruvate_Tfrase_sf"/>
</dbReference>
<dbReference type="InterPro" id="IPR050068">
    <property type="entry name" value="MurA_subfamily"/>
</dbReference>
<dbReference type="InterPro" id="IPR013792">
    <property type="entry name" value="RNA3'P_cycl/enolpyr_Trfase_a/b"/>
</dbReference>
<dbReference type="InterPro" id="IPR005750">
    <property type="entry name" value="UDP_GlcNAc_COvinyl_MurA"/>
</dbReference>
<dbReference type="NCBIfam" id="TIGR01072">
    <property type="entry name" value="murA"/>
    <property type="match status" value="1"/>
</dbReference>
<dbReference type="NCBIfam" id="NF006873">
    <property type="entry name" value="PRK09369.1"/>
    <property type="match status" value="1"/>
</dbReference>
<dbReference type="PANTHER" id="PTHR43783">
    <property type="entry name" value="UDP-N-ACETYLGLUCOSAMINE 1-CARBOXYVINYLTRANSFERASE"/>
    <property type="match status" value="1"/>
</dbReference>
<dbReference type="PANTHER" id="PTHR43783:SF1">
    <property type="entry name" value="UDP-N-ACETYLGLUCOSAMINE 1-CARBOXYVINYLTRANSFERASE"/>
    <property type="match status" value="1"/>
</dbReference>
<dbReference type="Pfam" id="PF00275">
    <property type="entry name" value="EPSP_synthase"/>
    <property type="match status" value="1"/>
</dbReference>
<dbReference type="SUPFAM" id="SSF55205">
    <property type="entry name" value="EPT/RTPC-like"/>
    <property type="match status" value="1"/>
</dbReference>
<reference key="1">
    <citation type="journal article" date="2003" name="Nature">
        <title>Genome divergence in two Prochlorococcus ecotypes reflects oceanic niche differentiation.</title>
        <authorList>
            <person name="Rocap G."/>
            <person name="Larimer F.W."/>
            <person name="Lamerdin J.E."/>
            <person name="Malfatti S."/>
            <person name="Chain P."/>
            <person name="Ahlgren N.A."/>
            <person name="Arellano A."/>
            <person name="Coleman M."/>
            <person name="Hauser L."/>
            <person name="Hess W.R."/>
            <person name="Johnson Z.I."/>
            <person name="Land M.L."/>
            <person name="Lindell D."/>
            <person name="Post A.F."/>
            <person name="Regala W."/>
            <person name="Shah M."/>
            <person name="Shaw S.L."/>
            <person name="Steglich C."/>
            <person name="Sullivan M.B."/>
            <person name="Ting C.S."/>
            <person name="Tolonen A."/>
            <person name="Webb E.A."/>
            <person name="Zinser E.R."/>
            <person name="Chisholm S.W."/>
        </authorList>
    </citation>
    <scope>NUCLEOTIDE SEQUENCE [LARGE SCALE GENOMIC DNA]</scope>
    <source>
        <strain>CCMP1986 / NIES-2087 / MED4</strain>
    </source>
</reference>
<accession>Q7V0G1</accession>
<keyword id="KW-0131">Cell cycle</keyword>
<keyword id="KW-0132">Cell division</keyword>
<keyword id="KW-0133">Cell shape</keyword>
<keyword id="KW-0961">Cell wall biogenesis/degradation</keyword>
<keyword id="KW-0963">Cytoplasm</keyword>
<keyword id="KW-0573">Peptidoglycan synthesis</keyword>
<keyword id="KW-0670">Pyruvate</keyword>
<keyword id="KW-0808">Transferase</keyword>
<gene>
    <name evidence="1" type="primary">murA</name>
    <name type="ordered locus">PMM1300</name>
</gene>
<feature type="chain" id="PRO_0000231245" description="UDP-N-acetylglucosamine 1-carboxyvinyltransferase">
    <location>
        <begin position="1"/>
        <end position="457"/>
    </location>
</feature>
<feature type="region of interest" description="Disordered" evidence="2">
    <location>
        <begin position="436"/>
        <end position="457"/>
    </location>
</feature>
<feature type="compositionally biased region" description="Basic and acidic residues" evidence="2">
    <location>
        <begin position="447"/>
        <end position="457"/>
    </location>
</feature>
<feature type="active site" description="Proton donor" evidence="1">
    <location>
        <position position="128"/>
    </location>
</feature>
<feature type="binding site" evidence="1">
    <location>
        <begin position="34"/>
        <end position="35"/>
    </location>
    <ligand>
        <name>phosphoenolpyruvate</name>
        <dbReference type="ChEBI" id="CHEBI:58702"/>
    </ligand>
</feature>
<feature type="binding site" evidence="1">
    <location>
        <position position="104"/>
    </location>
    <ligand>
        <name>UDP-N-acetyl-alpha-D-glucosamine</name>
        <dbReference type="ChEBI" id="CHEBI:57705"/>
    </ligand>
</feature>
<feature type="binding site" evidence="1">
    <location>
        <position position="319"/>
    </location>
    <ligand>
        <name>UDP-N-acetyl-alpha-D-glucosamine</name>
        <dbReference type="ChEBI" id="CHEBI:57705"/>
    </ligand>
</feature>
<feature type="binding site" evidence="1">
    <location>
        <position position="341"/>
    </location>
    <ligand>
        <name>UDP-N-acetyl-alpha-D-glucosamine</name>
        <dbReference type="ChEBI" id="CHEBI:57705"/>
    </ligand>
</feature>
<feature type="modified residue" description="2-(S-cysteinyl)pyruvic acid O-phosphothioketal" evidence="1">
    <location>
        <position position="128"/>
    </location>
</feature>
<sequence length="457" mass="49714">MVCVSNNKSYLKSQHLKIIGQKTLRGKVKISGAKNSALVLLAASLLTDEKIILDNVPLLTDIEKMGNILKNLGVKLHNKDHQLIIDSKNISIQELPYELVNGLRASFFCIGALLTRFGEASIPLPGGCNIGERPINEHINGLRALGAEIIIDRDVVKAKLVKKKTKLFGANIRLNCPSVGATETLIMAASLAEGRTVIENAAREPEIQDLCQMLNKMGAKIYDSGKEKIIIDGVHKLHGCTHKVIPDRIEAGTFLIAAAATSSSITVSPVIPNHLEAVLNKLEESGSKIIIKGNSISIKGNNIKAVDIKTAPFPGFPTDLQAPFMALMTIAKGRSKITETIFENRMNHVDLLNQMGSSITLKNNIAHINGVKKLRGMTLVGSDLRSSAALIIAALTSKSVSYVYGLEHLDRGYENFEQKLSKLGIEIKRQITKQTINKSKNRSSNSKLKEVSEIRAA</sequence>
<comment type="function">
    <text evidence="1">Cell wall formation. Adds enolpyruvyl to UDP-N-acetylglucosamine.</text>
</comment>
<comment type="catalytic activity">
    <reaction evidence="1">
        <text>phosphoenolpyruvate + UDP-N-acetyl-alpha-D-glucosamine = UDP-N-acetyl-3-O-(1-carboxyvinyl)-alpha-D-glucosamine + phosphate</text>
        <dbReference type="Rhea" id="RHEA:18681"/>
        <dbReference type="ChEBI" id="CHEBI:43474"/>
        <dbReference type="ChEBI" id="CHEBI:57705"/>
        <dbReference type="ChEBI" id="CHEBI:58702"/>
        <dbReference type="ChEBI" id="CHEBI:68483"/>
        <dbReference type="EC" id="2.5.1.7"/>
    </reaction>
</comment>
<comment type="pathway">
    <text evidence="1">Cell wall biogenesis; peptidoglycan biosynthesis.</text>
</comment>
<comment type="subcellular location">
    <subcellularLocation>
        <location evidence="1">Cytoplasm</location>
    </subcellularLocation>
</comment>
<comment type="similarity">
    <text evidence="1">Belongs to the EPSP synthase family. MurA subfamily.</text>
</comment>
<protein>
    <recommendedName>
        <fullName evidence="1">UDP-N-acetylglucosamine 1-carboxyvinyltransferase</fullName>
        <ecNumber evidence="1">2.5.1.7</ecNumber>
    </recommendedName>
    <alternativeName>
        <fullName evidence="1">Enoylpyruvate transferase</fullName>
    </alternativeName>
    <alternativeName>
        <fullName evidence="1">UDP-N-acetylglucosamine enolpyruvyl transferase</fullName>
        <shortName evidence="1">EPT</shortName>
    </alternativeName>
</protein>